<organism>
    <name type="scientific">Rattus norvegicus</name>
    <name type="common">Rat</name>
    <dbReference type="NCBI Taxonomy" id="10116"/>
    <lineage>
        <taxon>Eukaryota</taxon>
        <taxon>Metazoa</taxon>
        <taxon>Chordata</taxon>
        <taxon>Craniata</taxon>
        <taxon>Vertebrata</taxon>
        <taxon>Euteleostomi</taxon>
        <taxon>Mammalia</taxon>
        <taxon>Eutheria</taxon>
        <taxon>Euarchontoglires</taxon>
        <taxon>Glires</taxon>
        <taxon>Rodentia</taxon>
        <taxon>Myomorpha</taxon>
        <taxon>Muroidea</taxon>
        <taxon>Muridae</taxon>
        <taxon>Murinae</taxon>
        <taxon>Rattus</taxon>
    </lineage>
</organism>
<protein>
    <recommendedName>
        <fullName>Syntaxin-18</fullName>
    </recommendedName>
</protein>
<keyword id="KW-0175">Coiled coil</keyword>
<keyword id="KW-0256">Endoplasmic reticulum</keyword>
<keyword id="KW-0931">ER-Golgi transport</keyword>
<keyword id="KW-0333">Golgi apparatus</keyword>
<keyword id="KW-0472">Membrane</keyword>
<keyword id="KW-0653">Protein transport</keyword>
<keyword id="KW-1185">Reference proteome</keyword>
<keyword id="KW-0812">Transmembrane</keyword>
<keyword id="KW-1133">Transmembrane helix</keyword>
<keyword id="KW-0813">Transport</keyword>
<gene>
    <name type="primary">Stx18</name>
</gene>
<proteinExistence type="evidence at transcript level"/>
<feature type="chain" id="PRO_0000210234" description="Syntaxin-18">
    <location>
        <begin position="1"/>
        <end position="334"/>
    </location>
</feature>
<feature type="topological domain" description="Cytoplasmic" evidence="2">
    <location>
        <begin position="1"/>
        <end position="308"/>
    </location>
</feature>
<feature type="transmembrane region" description="Helical; Anchor for type IV membrane protein" evidence="2">
    <location>
        <begin position="309"/>
        <end position="329"/>
    </location>
</feature>
<feature type="topological domain" description="Vesicular" evidence="2">
    <location>
        <begin position="330"/>
        <end position="334"/>
    </location>
</feature>
<feature type="domain" description="t-SNARE coiled-coil homology">
    <location>
        <begin position="242"/>
        <end position="304"/>
    </location>
</feature>
<feature type="region of interest" description="Disordered" evidence="3">
    <location>
        <begin position="29"/>
        <end position="50"/>
    </location>
</feature>
<feature type="region of interest" description="Disordered" evidence="3">
    <location>
        <begin position="166"/>
        <end position="225"/>
    </location>
</feature>
<feature type="compositionally biased region" description="Basic and acidic residues" evidence="3">
    <location>
        <begin position="33"/>
        <end position="50"/>
    </location>
</feature>
<feature type="compositionally biased region" description="Basic and acidic residues" evidence="3">
    <location>
        <begin position="166"/>
        <end position="186"/>
    </location>
</feature>
<feature type="compositionally biased region" description="Basic and acidic residues" evidence="3">
    <location>
        <begin position="193"/>
        <end position="207"/>
    </location>
</feature>
<reference key="1">
    <citation type="journal article" date="2004" name="Genome Res.">
        <title>The status, quality, and expansion of the NIH full-length cDNA project: the Mammalian Gene Collection (MGC).</title>
        <authorList>
            <consortium name="The MGC Project Team"/>
        </authorList>
    </citation>
    <scope>NUCLEOTIDE SEQUENCE [LARGE SCALE MRNA]</scope>
    <source>
        <tissue>Testis</tissue>
    </source>
</reference>
<evidence type="ECO:0000250" key="1"/>
<evidence type="ECO:0000255" key="2"/>
<evidence type="ECO:0000256" key="3">
    <source>
        <dbReference type="SAM" id="MobiDB-lite"/>
    </source>
</evidence>
<evidence type="ECO:0000305" key="4"/>
<accession>Q68FW4</accession>
<name>STX18_RAT</name>
<sequence>MAVDITLLFRASVKTVKTRNKALGVAVGGGADGSRDELFRRSPRPKGDFSSRAREVISHIGKLRDFLLEHRKEYINAYSHTMSEYGRMTDTERDQIDQDAQIFMRTCKDAIQQLRTEAHKEIHSQQVKEHRTAVLDFVEDYLKRVCKLYSEQRAIRVKRVVDKKRLSKLEPEPHTKRKEPASEKSSHNASQDSEEKPAAEDLPEKPLAESQPELGTWGDGKGEDELSPEEIQMFEQENQRLIGEMNSLFDEVRQIEGKVVEISRLQEIFTEKVLQQETEIDSIHQLVVGATENIKEGNEDIREAIKNNAGFRVWILFFLVMCSFSLLFLDWYDS</sequence>
<dbReference type="EMBL" id="BC079183">
    <property type="protein sequence ID" value="AAH79183.1"/>
    <property type="molecule type" value="mRNA"/>
</dbReference>
<dbReference type="RefSeq" id="NP_001012151.1">
    <property type="nucleotide sequence ID" value="NM_001012151.1"/>
</dbReference>
<dbReference type="SMR" id="Q68FW4"/>
<dbReference type="CORUM" id="Q68FW4"/>
<dbReference type="FunCoup" id="Q68FW4">
    <property type="interactions" value="3514"/>
</dbReference>
<dbReference type="IntAct" id="Q68FW4">
    <property type="interactions" value="6"/>
</dbReference>
<dbReference type="STRING" id="10116.ENSRNOP00000008410"/>
<dbReference type="PhosphoSitePlus" id="Q68FW4"/>
<dbReference type="jPOST" id="Q68FW4"/>
<dbReference type="PaxDb" id="10116-ENSRNOP00000008410"/>
<dbReference type="Ensembl" id="ENSRNOT00000095745.1">
    <property type="protein sequence ID" value="ENSRNOP00000082982.1"/>
    <property type="gene ID" value="ENSRNOG00000006139.8"/>
</dbReference>
<dbReference type="GeneID" id="360953"/>
<dbReference type="KEGG" id="rno:360953"/>
<dbReference type="AGR" id="RGD:1310058"/>
<dbReference type="CTD" id="53407"/>
<dbReference type="RGD" id="1310058">
    <property type="gene designation" value="Stx18"/>
</dbReference>
<dbReference type="eggNOG" id="KOG3894">
    <property type="taxonomic scope" value="Eukaryota"/>
</dbReference>
<dbReference type="GeneTree" id="ENSGT00390000014853"/>
<dbReference type="HOGENOM" id="CLU_071402_1_0_1"/>
<dbReference type="InParanoid" id="Q68FW4"/>
<dbReference type="OrthoDB" id="52129at9989"/>
<dbReference type="PhylomeDB" id="Q68FW4"/>
<dbReference type="TreeFam" id="TF105868"/>
<dbReference type="Reactome" id="R-RNO-6811434">
    <property type="pathway name" value="COPI-dependent Golgi-to-ER retrograde traffic"/>
</dbReference>
<dbReference type="PRO" id="PR:Q68FW4"/>
<dbReference type="Proteomes" id="UP000002494">
    <property type="component" value="Chromosome 14"/>
</dbReference>
<dbReference type="Bgee" id="ENSRNOG00000006139">
    <property type="expression patterns" value="Expressed in testis and 20 other cell types or tissues"/>
</dbReference>
<dbReference type="GO" id="GO:0005783">
    <property type="term" value="C:endoplasmic reticulum"/>
    <property type="evidence" value="ECO:0000266"/>
    <property type="project" value="RGD"/>
</dbReference>
<dbReference type="GO" id="GO:0005789">
    <property type="term" value="C:endoplasmic reticulum membrane"/>
    <property type="evidence" value="ECO:0007669"/>
    <property type="project" value="UniProtKB-SubCell"/>
</dbReference>
<dbReference type="GO" id="GO:0000139">
    <property type="term" value="C:Golgi membrane"/>
    <property type="evidence" value="ECO:0007669"/>
    <property type="project" value="UniProtKB-SubCell"/>
</dbReference>
<dbReference type="GO" id="GO:0031201">
    <property type="term" value="C:SNARE complex"/>
    <property type="evidence" value="ECO:0000318"/>
    <property type="project" value="GO_Central"/>
</dbReference>
<dbReference type="GO" id="GO:0019904">
    <property type="term" value="F:protein domain specific binding"/>
    <property type="evidence" value="ECO:0000266"/>
    <property type="project" value="RGD"/>
</dbReference>
<dbReference type="GO" id="GO:0005484">
    <property type="term" value="F:SNAP receptor activity"/>
    <property type="evidence" value="ECO:0007669"/>
    <property type="project" value="InterPro"/>
</dbReference>
<dbReference type="GO" id="GO:0090158">
    <property type="term" value="P:endoplasmic reticulum membrane organization"/>
    <property type="evidence" value="ECO:0000266"/>
    <property type="project" value="RGD"/>
</dbReference>
<dbReference type="GO" id="GO:0006886">
    <property type="term" value="P:intracellular protein transport"/>
    <property type="evidence" value="ECO:0007669"/>
    <property type="project" value="InterPro"/>
</dbReference>
<dbReference type="GO" id="GO:1902953">
    <property type="term" value="P:positive regulation of ER to Golgi vesicle-mediated transport"/>
    <property type="evidence" value="ECO:0000266"/>
    <property type="project" value="RGD"/>
</dbReference>
<dbReference type="GO" id="GO:1902117">
    <property type="term" value="P:positive regulation of organelle assembly"/>
    <property type="evidence" value="ECO:0000266"/>
    <property type="project" value="RGD"/>
</dbReference>
<dbReference type="GO" id="GO:1903358">
    <property type="term" value="P:regulation of Golgi organization"/>
    <property type="evidence" value="ECO:0000266"/>
    <property type="project" value="RGD"/>
</dbReference>
<dbReference type="GO" id="GO:0006890">
    <property type="term" value="P:retrograde vesicle-mediated transport, Golgi to endoplasmic reticulum"/>
    <property type="evidence" value="ECO:0000318"/>
    <property type="project" value="GO_Central"/>
</dbReference>
<dbReference type="CDD" id="cd15850">
    <property type="entry name" value="SNARE_syntaxin18"/>
    <property type="match status" value="1"/>
</dbReference>
<dbReference type="FunFam" id="1.20.5.110:FF:000015">
    <property type="entry name" value="Syntaxin-18, putative"/>
    <property type="match status" value="1"/>
</dbReference>
<dbReference type="Gene3D" id="1.20.5.110">
    <property type="match status" value="1"/>
</dbReference>
<dbReference type="InterPro" id="IPR019529">
    <property type="entry name" value="Syntaxin-18_N"/>
</dbReference>
<dbReference type="InterPro" id="IPR006012">
    <property type="entry name" value="Syntaxin/epimorphin_CS"/>
</dbReference>
<dbReference type="PANTHER" id="PTHR15959">
    <property type="entry name" value="SYNTAXIN-18"/>
    <property type="match status" value="1"/>
</dbReference>
<dbReference type="PANTHER" id="PTHR15959:SF0">
    <property type="entry name" value="SYNTAXIN-18"/>
    <property type="match status" value="1"/>
</dbReference>
<dbReference type="Pfam" id="PF10496">
    <property type="entry name" value="Syntaxin-18_N"/>
    <property type="match status" value="1"/>
</dbReference>
<dbReference type="SUPFAM" id="SSF58038">
    <property type="entry name" value="SNARE fusion complex"/>
    <property type="match status" value="1"/>
</dbReference>
<dbReference type="PROSITE" id="PS00914">
    <property type="entry name" value="SYNTAXIN"/>
    <property type="match status" value="1"/>
</dbReference>
<comment type="function">
    <text evidence="1">Syntaxin that may be involved in targeting and fusion of Golgi-derived retrograde transport vesicles with the ER.</text>
</comment>
<comment type="subunit">
    <text evidence="1">Component of a SNARE complex consisting of STX18, USE1L, BNIP1/SEC20L, and SEC22B. RINT1/TIP20L and ZW10 are associated with the complex through interaction with BNIP1/SEC20L. Interacts directly with USE1L and BNIP1/SEC20L (By similarity).</text>
</comment>
<comment type="subcellular location">
    <subcellularLocation>
        <location evidence="1">Endoplasmic reticulum membrane</location>
        <topology evidence="1">Single-pass type IV membrane protein</topology>
    </subcellularLocation>
    <subcellularLocation>
        <location evidence="4">Golgi apparatus membrane</location>
        <topology evidence="4">Single-pass type IV membrane protein</topology>
    </subcellularLocation>
</comment>
<comment type="similarity">
    <text evidence="4">Belongs to the syntaxin family.</text>
</comment>